<proteinExistence type="evidence at protein level"/>
<reference key="1">
    <citation type="journal article" date="1998" name="Nature">
        <title>Deciphering the biology of Mycobacterium tuberculosis from the complete genome sequence.</title>
        <authorList>
            <person name="Cole S.T."/>
            <person name="Brosch R."/>
            <person name="Parkhill J."/>
            <person name="Garnier T."/>
            <person name="Churcher C.M."/>
            <person name="Harris D.E."/>
            <person name="Gordon S.V."/>
            <person name="Eiglmeier K."/>
            <person name="Gas S."/>
            <person name="Barry C.E. III"/>
            <person name="Tekaia F."/>
            <person name="Badcock K."/>
            <person name="Basham D."/>
            <person name="Brown D."/>
            <person name="Chillingworth T."/>
            <person name="Connor R."/>
            <person name="Davies R.M."/>
            <person name="Devlin K."/>
            <person name="Feltwell T."/>
            <person name="Gentles S."/>
            <person name="Hamlin N."/>
            <person name="Holroyd S."/>
            <person name="Hornsby T."/>
            <person name="Jagels K."/>
            <person name="Krogh A."/>
            <person name="McLean J."/>
            <person name="Moule S."/>
            <person name="Murphy L.D."/>
            <person name="Oliver S."/>
            <person name="Osborne J."/>
            <person name="Quail M.A."/>
            <person name="Rajandream M.A."/>
            <person name="Rogers J."/>
            <person name="Rutter S."/>
            <person name="Seeger K."/>
            <person name="Skelton S."/>
            <person name="Squares S."/>
            <person name="Squares R."/>
            <person name="Sulston J.E."/>
            <person name="Taylor K."/>
            <person name="Whitehead S."/>
            <person name="Barrell B.G."/>
        </authorList>
    </citation>
    <scope>NUCLEOTIDE SEQUENCE [LARGE SCALE GENOMIC DNA]</scope>
    <source>
        <strain>ATCC 25618 / H37Rv</strain>
    </source>
</reference>
<reference key="2">
    <citation type="journal article" date="2011" name="Mol. Cell. Proteomics">
        <title>Proteogenomic analysis of Mycobacterium tuberculosis by high resolution mass spectrometry.</title>
        <authorList>
            <person name="Kelkar D.S."/>
            <person name="Kumar D."/>
            <person name="Kumar P."/>
            <person name="Balakrishnan L."/>
            <person name="Muthusamy B."/>
            <person name="Yadav A.K."/>
            <person name="Shrivastava P."/>
            <person name="Marimuthu A."/>
            <person name="Anand S."/>
            <person name="Sundaram H."/>
            <person name="Kingsbury R."/>
            <person name="Harsha H.C."/>
            <person name="Nair B."/>
            <person name="Prasad T.S."/>
            <person name="Chauhan D.S."/>
            <person name="Katoch K."/>
            <person name="Katoch V.M."/>
            <person name="Kumar P."/>
            <person name="Chaerkady R."/>
            <person name="Ramachandran S."/>
            <person name="Dash D."/>
            <person name="Pandey A."/>
        </authorList>
    </citation>
    <scope>IDENTIFICATION BY MASS SPECTROMETRY [LARGE SCALE ANALYSIS]</scope>
    <source>
        <strain>ATCC 25618 / H37Rv</strain>
    </source>
</reference>
<gene>
    <name type="ordered locus">Rv2658c</name>
    <name type="ORF">MTCY441.27c</name>
</gene>
<dbReference type="EMBL" id="AL123456">
    <property type="protein sequence ID" value="CCP45456.1"/>
    <property type="molecule type" value="Genomic_DNA"/>
</dbReference>
<dbReference type="PIR" id="F70966">
    <property type="entry name" value="F70966"/>
</dbReference>
<dbReference type="RefSeq" id="NP_217174.1">
    <property type="nucleotide sequence ID" value="NC_000962.3"/>
</dbReference>
<dbReference type="RefSeq" id="WP_003900543.1">
    <property type="nucleotide sequence ID" value="NZ_NVQJ01000079.1"/>
</dbReference>
<dbReference type="STRING" id="83332.Rv2658c"/>
<dbReference type="PaxDb" id="83332-Rv2658c"/>
<dbReference type="DNASU" id="888562"/>
<dbReference type="GeneID" id="888562"/>
<dbReference type="KEGG" id="mtu:Rv2658c"/>
<dbReference type="KEGG" id="mtv:RVBD_2658c"/>
<dbReference type="PATRIC" id="fig|83332.111.peg.2965"/>
<dbReference type="TubercuList" id="Rv2658c"/>
<dbReference type="InParanoid" id="P9WL47"/>
<dbReference type="OrthoDB" id="9985562at2"/>
<dbReference type="Proteomes" id="UP000001584">
    <property type="component" value="Chromosome"/>
</dbReference>
<accession>P9WL47</accession>
<accession>L0TAI3</accession>
<accession>P71955</accession>
<keyword id="KW-1185">Reference proteome</keyword>
<feature type="chain" id="PRO_0000104082" description="Uncharacterized protein Rv2658c">
    <location>
        <begin position="1"/>
        <end position="120"/>
    </location>
</feature>
<name>Y2658_MYCTU</name>
<sequence length="120" mass="13314">MADAVKYVVMCNCDDEPGALIIAWIDDERPAGGHIQMRSNTRFTETQWGRHIEWKLECRACRKYAPISEMTAAAILDGFGAKLHELRTSTIPDADDPSIAEARHVIPFSALCLRLSQLGG</sequence>
<protein>
    <recommendedName>
        <fullName>Uncharacterized protein Rv2658c</fullName>
    </recommendedName>
</protein>
<organism>
    <name type="scientific">Mycobacterium tuberculosis (strain ATCC 25618 / H37Rv)</name>
    <dbReference type="NCBI Taxonomy" id="83332"/>
    <lineage>
        <taxon>Bacteria</taxon>
        <taxon>Bacillati</taxon>
        <taxon>Actinomycetota</taxon>
        <taxon>Actinomycetes</taxon>
        <taxon>Mycobacteriales</taxon>
        <taxon>Mycobacteriaceae</taxon>
        <taxon>Mycobacterium</taxon>
        <taxon>Mycobacterium tuberculosis complex</taxon>
    </lineage>
</organism>